<organism>
    <name type="scientific">Clostridioides difficile</name>
    <name type="common">Peptoclostridium difficile</name>
    <dbReference type="NCBI Taxonomy" id="1496"/>
    <lineage>
        <taxon>Bacteria</taxon>
        <taxon>Bacillati</taxon>
        <taxon>Bacillota</taxon>
        <taxon>Clostridia</taxon>
        <taxon>Peptostreptococcales</taxon>
        <taxon>Peptostreptococcaceae</taxon>
        <taxon>Clostridioides</taxon>
    </lineage>
</organism>
<reference key="1">
    <citation type="journal article" date="2005" name="FEBS J.">
        <title>2-hydroxyisocaproyl-CoA dehydratase and its activator from Clostridium difficile.</title>
        <authorList>
            <person name="Kim J."/>
            <person name="Darley D."/>
            <person name="Buckel W."/>
        </authorList>
    </citation>
    <scope>NUCLEOTIDE SEQUENCE [GENOMIC DNA]</scope>
    <source>
        <strain>ATCC 9689 / DSM 1296 / BCRC 10642 / JCM 1296 / NCIMB 10666 / NCTC 11209 / 90556-M6S</strain>
    </source>
</reference>
<reference key="2">
    <citation type="journal article" date="2006" name="Appl. Environ. Microbiol.">
        <title>Characterization of (R)-2-hydroxyisocaproate dehydrogenase and a family III coenzyme A transferase involved in reduction of L-leucine to isocaproate by Clostridium difficile.</title>
        <authorList>
            <person name="Kim J."/>
            <person name="Darley D."/>
            <person name="Selmer T."/>
            <person name="Buckel W."/>
        </authorList>
    </citation>
    <scope>FUNCTION</scope>
    <scope>CATALYTIC ACTIVITY</scope>
    <scope>BIOPHYSICOCHEMICAL PROPERTIES</scope>
    <scope>SUBUNIT</scope>
    <source>
        <strain>ATCC 9689 / DSM 1296 / BCRC 10642 / JCM 1296 / NCIMB 10666 / NCTC 11209 / 90556-M6S</strain>
    </source>
</reference>
<evidence type="ECO:0000250" key="1">
    <source>
        <dbReference type="UniProtKB" id="P26297"/>
    </source>
</evidence>
<evidence type="ECO:0000269" key="2">
    <source>
    </source>
</evidence>
<evidence type="ECO:0000303" key="3">
    <source>
    </source>
</evidence>
<evidence type="ECO:0000303" key="4">
    <source>
    </source>
</evidence>
<evidence type="ECO:0000305" key="5"/>
<evidence type="ECO:0000305" key="6">
    <source>
    </source>
</evidence>
<protein>
    <recommendedName>
        <fullName evidence="5">D-2-hydroxyacid dehydrogenase (NAD(+))</fullName>
        <ecNumber evidence="2">1.1.1.345</ecNumber>
    </recommendedName>
    <alternativeName>
        <fullName evidence="4">(R)-2-hydroxyisocaproate dehydrogenase</fullName>
    </alternativeName>
</protein>
<name>LDHA_CLODI</name>
<accession>Q5U922</accession>
<keyword id="KW-0520">NAD</keyword>
<keyword id="KW-0560">Oxidoreductase</keyword>
<gene>
    <name evidence="3" type="primary">ldhA</name>
</gene>
<sequence length="332" mass="36518">MKILVFGARDYEEPVIKKWSEEHKDVQVDIYPENMTEENVVKAKGYDGISIQQTNYIDNPYIYETLKDAGVKVIASRTAGVDMIHFDLVNENGLIVTNVPSYSPNAIAELAVTQAMNLLRKTPLVKKKVCEGDYRWIAELLGTEVRSITVGVIGTGKIGATSAKLFKGLGANVIAFDQYPNSDLNDILTYKDSLEDLLKEADLITLHTPLLEGTKHMINKDTLAIMKDGAYIVNTGRGGLINTGDLIEALESGKIRAAALDTFETEGLFLNKKMNPGELTDPEINKLLSMEQVIFTHHLGFFTSTAIENIVYSSLSSAVEVIKTGTATNRVN</sequence>
<dbReference type="EC" id="1.1.1.345" evidence="2"/>
<dbReference type="EMBL" id="AY772817">
    <property type="protein sequence ID" value="AAV40821.1"/>
    <property type="status" value="ALT_INIT"/>
    <property type="molecule type" value="Genomic_DNA"/>
</dbReference>
<dbReference type="RefSeq" id="WP_003431407.1">
    <property type="nucleotide sequence ID" value="NZ_WUUI01000021.1"/>
</dbReference>
<dbReference type="SMR" id="Q5U922"/>
<dbReference type="OMA" id="HHTRAAM"/>
<dbReference type="UniPathway" id="UPA00363"/>
<dbReference type="GO" id="GO:0008720">
    <property type="term" value="F:D-lactate dehydrogenase activity"/>
    <property type="evidence" value="ECO:0007669"/>
    <property type="project" value="TreeGrafter"/>
</dbReference>
<dbReference type="GO" id="GO:0051287">
    <property type="term" value="F:NAD binding"/>
    <property type="evidence" value="ECO:0007669"/>
    <property type="project" value="InterPro"/>
</dbReference>
<dbReference type="CDD" id="cd12186">
    <property type="entry name" value="LDH"/>
    <property type="match status" value="1"/>
</dbReference>
<dbReference type="Gene3D" id="3.40.50.720">
    <property type="entry name" value="NAD(P)-binding Rossmann-like Domain"/>
    <property type="match status" value="2"/>
</dbReference>
<dbReference type="InterPro" id="IPR006139">
    <property type="entry name" value="D-isomer_2_OHA_DH_cat_dom"/>
</dbReference>
<dbReference type="InterPro" id="IPR029753">
    <property type="entry name" value="D-isomer_DH_CS"/>
</dbReference>
<dbReference type="InterPro" id="IPR029752">
    <property type="entry name" value="D-isomer_DH_CS1"/>
</dbReference>
<dbReference type="InterPro" id="IPR006140">
    <property type="entry name" value="D-isomer_DH_NAD-bd"/>
</dbReference>
<dbReference type="InterPro" id="IPR036291">
    <property type="entry name" value="NAD(P)-bd_dom_sf"/>
</dbReference>
<dbReference type="PANTHER" id="PTHR43026">
    <property type="entry name" value="2-HYDROXYACID DEHYDROGENASE HOMOLOG 1-RELATED"/>
    <property type="match status" value="1"/>
</dbReference>
<dbReference type="PANTHER" id="PTHR43026:SF1">
    <property type="entry name" value="2-HYDROXYACID DEHYDROGENASE HOMOLOG 1-RELATED"/>
    <property type="match status" value="1"/>
</dbReference>
<dbReference type="Pfam" id="PF00389">
    <property type="entry name" value="2-Hacid_dh"/>
    <property type="match status" value="1"/>
</dbReference>
<dbReference type="Pfam" id="PF02826">
    <property type="entry name" value="2-Hacid_dh_C"/>
    <property type="match status" value="1"/>
</dbReference>
<dbReference type="SUPFAM" id="SSF52283">
    <property type="entry name" value="Formate/glycerate dehydrogenase catalytic domain-like"/>
    <property type="match status" value="1"/>
</dbReference>
<dbReference type="SUPFAM" id="SSF51735">
    <property type="entry name" value="NAD(P)-binding Rossmann-fold domains"/>
    <property type="match status" value="1"/>
</dbReference>
<dbReference type="PROSITE" id="PS00065">
    <property type="entry name" value="D_2_HYDROXYACID_DH_1"/>
    <property type="match status" value="1"/>
</dbReference>
<dbReference type="PROSITE" id="PS00671">
    <property type="entry name" value="D_2_HYDROXYACID_DH_3"/>
    <property type="match status" value="1"/>
</dbReference>
<comment type="function">
    <text evidence="2">Involved in the reductive branch of L-leucine fermentation (PubMed:16957230). Catalyzes the NADH-dependent reduction of 4-methyl-2-oxopentanoate (2-oxoisocaproate) to (R)-2-hydroxy-4-methylpentanoate ((R)-2-hydroxyisocaproate) (PubMed:16957230). For the reverse reaction, the enzyme accepts (R)- but not (S)-2-hydroxy-4-methylpentanoate (PubMed:16957230). Can also use 2-oxopentanoate, 2-oxohexanoate and phenylpyruvate but not 2-oxoisovalerate and 2-oxobutyrate (PubMed:16957230). Cannot use NADPH (PubMed:16957230).</text>
</comment>
<comment type="catalytic activity">
    <reaction evidence="2">
        <text>a (2R)-2-hydroxycarboxylate + NAD(+) = a 2-oxocarboxylate + NADH + H(+)</text>
        <dbReference type="Rhea" id="RHEA:35643"/>
        <dbReference type="ChEBI" id="CHEBI:15378"/>
        <dbReference type="ChEBI" id="CHEBI:35179"/>
        <dbReference type="ChEBI" id="CHEBI:57540"/>
        <dbReference type="ChEBI" id="CHEBI:57945"/>
        <dbReference type="ChEBI" id="CHEBI:58314"/>
        <dbReference type="EC" id="1.1.1.345"/>
    </reaction>
    <physiologicalReaction direction="right-to-left" evidence="2">
        <dbReference type="Rhea" id="RHEA:35645"/>
    </physiologicalReaction>
</comment>
<comment type="catalytic activity">
    <reaction evidence="2">
        <text>(2R)-hydroxy-4-methylpentanoate + NAD(+) = 4-methyl-2-oxopentanoate + NADH + H(+)</text>
        <dbReference type="Rhea" id="RHEA:10052"/>
        <dbReference type="ChEBI" id="CHEBI:15378"/>
        <dbReference type="ChEBI" id="CHEBI:17865"/>
        <dbReference type="ChEBI" id="CHEBI:55535"/>
        <dbReference type="ChEBI" id="CHEBI:57540"/>
        <dbReference type="ChEBI" id="CHEBI:57945"/>
        <dbReference type="EC" id="1.1.1.345"/>
    </reaction>
    <physiologicalReaction direction="right-to-left" evidence="2">
        <dbReference type="Rhea" id="RHEA:10054"/>
    </physiologicalReaction>
</comment>
<comment type="biophysicochemical properties">
    <kinetics>
        <KM evidence="2">68 uM for 4-methyl-2-oxopentanoate</KM>
        <KM evidence="2">84 uM for 2-oxopentanoate</KM>
        <KM evidence="2">5 mM for 2-oxohexanoate</KM>
        <KM evidence="2">10 mM for phenylpyruvate</KM>
        <KM evidence="2">56 uM for NAD(+)</KM>
        <KM evidence="2">2.8 mM for (R)-2-hydroxy-4-methylpentanoate</KM>
        <KM evidence="2">31 uM for NADH</KM>
        <text evidence="2">kcat is 31 sec(-1) with 4-methyl-2-oxopentanoate as substrate. kcat is 22 sec(-1) with 2-oxopentanoate as substrate. kcat is 33 sec(-1) with 2-oxohexanoate as substrate. kcat is 63 sec(-1) with phenylpyruvate as substrate. kcat is 25 sec(-1) with NAD(+) as substrate. kcat is 51 sec(-1) with (R)-2-hydroxy-4-methylpentanoate as substrate. kcat is 49 sec(-1) with NADH as substrate.</text>
    </kinetics>
</comment>
<comment type="pathway">
    <text evidence="6">Amino-acid degradation; L-leucine degradation.</text>
</comment>
<comment type="subunit">
    <text evidence="2">Monomer.</text>
</comment>
<comment type="similarity">
    <text evidence="5">Belongs to the D-isomer specific 2-hydroxyacid dehydrogenase family.</text>
</comment>
<comment type="sequence caution" evidence="5">
    <conflict type="erroneous initiation">
        <sequence resource="EMBL-CDS" id="AAV40821"/>
    </conflict>
    <text>Truncated N-terminus.</text>
</comment>
<proteinExistence type="evidence at protein level"/>
<feature type="chain" id="PRO_0000460927" description="D-2-hydroxyacid dehydrogenase (NAD(+))">
    <location>
        <begin position="1"/>
        <end position="332"/>
    </location>
</feature>
<feature type="active site" evidence="1">
    <location>
        <position position="237"/>
    </location>
</feature>
<feature type="active site" evidence="1">
    <location>
        <position position="266"/>
    </location>
</feature>
<feature type="active site" description="Proton donor" evidence="1">
    <location>
        <position position="298"/>
    </location>
</feature>